<dbReference type="EMBL" id="AY653733">
    <property type="protein sequence ID" value="AAV50947.1"/>
    <property type="molecule type" value="Genomic_DNA"/>
</dbReference>
<dbReference type="KEGG" id="vg:9925337"/>
<dbReference type="Proteomes" id="UP000001134">
    <property type="component" value="Genome"/>
</dbReference>
<organism>
    <name type="scientific">Acanthamoeba polyphaga mimivirus</name>
    <name type="common">APMV</name>
    <dbReference type="NCBI Taxonomy" id="212035"/>
    <lineage>
        <taxon>Viruses</taxon>
        <taxon>Varidnaviria</taxon>
        <taxon>Bamfordvirae</taxon>
        <taxon>Nucleocytoviricota</taxon>
        <taxon>Megaviricetes</taxon>
        <taxon>Imitervirales</taxon>
        <taxon>Mimiviridae</taxon>
        <taxon>Megamimivirinae</taxon>
        <taxon>Mimivirus</taxon>
        <taxon>Mimivirus bradfordmassiliense</taxon>
    </lineage>
</organism>
<accession>Q5UNU3</accession>
<name>YL686_MIMIV</name>
<gene>
    <name type="ordered locus">MIMI_L686</name>
</gene>
<reference key="1">
    <citation type="journal article" date="2004" name="Science">
        <title>The 1.2-megabase genome sequence of Mimivirus.</title>
        <authorList>
            <person name="Raoult D."/>
            <person name="Audic S."/>
            <person name="Robert C."/>
            <person name="Abergel C."/>
            <person name="Renesto P."/>
            <person name="Ogata H."/>
            <person name="La Scola B."/>
            <person name="Susan M."/>
            <person name="Claverie J.-M."/>
        </authorList>
    </citation>
    <scope>NUCLEOTIDE SEQUENCE [LARGE SCALE GENOMIC DNA]</scope>
    <source>
        <strain>Rowbotham-Bradford</strain>
    </source>
</reference>
<protein>
    <recommendedName>
        <fullName>Uncharacterized protein L686</fullName>
    </recommendedName>
</protein>
<organismHost>
    <name type="scientific">Acanthamoeba polyphaga</name>
    <name type="common">Amoeba</name>
    <dbReference type="NCBI Taxonomy" id="5757"/>
</organismHost>
<feature type="chain" id="PRO_0000071318" description="Uncharacterized protein L686">
    <location>
        <begin position="1"/>
        <end position="219"/>
    </location>
</feature>
<keyword id="KW-1185">Reference proteome</keyword>
<sequence length="219" mass="24130">MNPTSVEVSTTNIEVNQKSQCTVDAPSDCQCNLTSETVIDVNDKIDVVVVDTSDNIPKPQITEKVVEKEVVEQVKKTSTIKVRLEAKTKLNYINQFLDQAPKESVVLHKGLDVELVSGITISIGDNRENKYTVVSDWLPVPVHATNINTPNPNNLTSVNCVLPSETVVLTDRGLPWKLPVDFSVELPNPCPVTIYAGTKLQQNEFQVVLASDCKVNVVY</sequence>
<proteinExistence type="predicted"/>